<organism>
    <name type="scientific">Bos taurus</name>
    <name type="common">Bovine</name>
    <dbReference type="NCBI Taxonomy" id="9913"/>
    <lineage>
        <taxon>Eukaryota</taxon>
        <taxon>Metazoa</taxon>
        <taxon>Chordata</taxon>
        <taxon>Craniata</taxon>
        <taxon>Vertebrata</taxon>
        <taxon>Euteleostomi</taxon>
        <taxon>Mammalia</taxon>
        <taxon>Eutheria</taxon>
        <taxon>Laurasiatheria</taxon>
        <taxon>Artiodactyla</taxon>
        <taxon>Ruminantia</taxon>
        <taxon>Pecora</taxon>
        <taxon>Bovidae</taxon>
        <taxon>Bovinae</taxon>
        <taxon>Bos</taxon>
    </lineage>
</organism>
<name>TM205_BOVIN</name>
<protein>
    <recommendedName>
        <fullName>Transmembrane protein 205</fullName>
    </recommendedName>
</protein>
<proteinExistence type="evidence at transcript level"/>
<gene>
    <name type="primary">TMEM205</name>
</gene>
<comment type="subcellular location">
    <subcellularLocation>
        <location evidence="2">Membrane</location>
        <topology evidence="2">Multi-pass membrane protein</topology>
    </subcellularLocation>
</comment>
<comment type="similarity">
    <text evidence="2">Belongs to the TMEM205 family.</text>
</comment>
<reference key="1">
    <citation type="submission" date="2005-11" db="EMBL/GenBank/DDBJ databases">
        <authorList>
            <consortium name="NIH - Mammalian Gene Collection (MGC) project"/>
        </authorList>
    </citation>
    <scope>NUCLEOTIDE SEQUENCE [LARGE SCALE MRNA]</scope>
    <source>
        <strain>Crossbred X Angus</strain>
        <tissue>Liver</tissue>
    </source>
</reference>
<dbReference type="EMBL" id="BC109820">
    <property type="protein sequence ID" value="AAI09821.1"/>
    <property type="molecule type" value="mRNA"/>
</dbReference>
<dbReference type="RefSeq" id="NP_001032688.1">
    <property type="nucleotide sequence ID" value="NM_001037599.2"/>
</dbReference>
<dbReference type="RefSeq" id="XP_005208797.1">
    <property type="nucleotide sequence ID" value="XM_005208740.4"/>
</dbReference>
<dbReference type="RefSeq" id="XP_005208798.1">
    <property type="nucleotide sequence ID" value="XM_005208741.4"/>
</dbReference>
<dbReference type="RefSeq" id="XP_005208799.1">
    <property type="nucleotide sequence ID" value="XM_005208742.4"/>
</dbReference>
<dbReference type="FunCoup" id="Q32L10">
    <property type="interactions" value="2032"/>
</dbReference>
<dbReference type="STRING" id="9913.ENSBTAP00000021848"/>
<dbReference type="PaxDb" id="9913-ENSBTAP00000021848"/>
<dbReference type="PeptideAtlas" id="Q32L10"/>
<dbReference type="Ensembl" id="ENSBTAT00000021848.4">
    <property type="protein sequence ID" value="ENSBTAP00000021848.2"/>
    <property type="gene ID" value="ENSBTAG00000016429.4"/>
</dbReference>
<dbReference type="GeneID" id="513699"/>
<dbReference type="KEGG" id="bta:513699"/>
<dbReference type="CTD" id="374882"/>
<dbReference type="VEuPathDB" id="HostDB:ENSBTAG00000016429"/>
<dbReference type="VGNC" id="VGNC:36027">
    <property type="gene designation" value="TMEM205"/>
</dbReference>
<dbReference type="eggNOG" id="KOG2886">
    <property type="taxonomic scope" value="Eukaryota"/>
</dbReference>
<dbReference type="GeneTree" id="ENSGT00390000016298"/>
<dbReference type="HOGENOM" id="CLU_094297_1_1_1"/>
<dbReference type="InParanoid" id="Q32L10"/>
<dbReference type="OMA" id="FQMRAVE"/>
<dbReference type="OrthoDB" id="1641132at2759"/>
<dbReference type="TreeFam" id="TF323838"/>
<dbReference type="Proteomes" id="UP000009136">
    <property type="component" value="Chromosome 7"/>
</dbReference>
<dbReference type="Bgee" id="ENSBTAG00000016429">
    <property type="expression patterns" value="Expressed in liver and 106 other cell types or tissues"/>
</dbReference>
<dbReference type="GO" id="GO:0016020">
    <property type="term" value="C:membrane"/>
    <property type="evidence" value="ECO:0007669"/>
    <property type="project" value="UniProtKB-SubCell"/>
</dbReference>
<dbReference type="InterPro" id="IPR042623">
    <property type="entry name" value="TMEM205"/>
</dbReference>
<dbReference type="InterPro" id="IPR025423">
    <property type="entry name" value="TMEM205-like"/>
</dbReference>
<dbReference type="PANTHER" id="PTHR46916">
    <property type="entry name" value="TRANSMEMBRANE PROTEIN 205"/>
    <property type="match status" value="1"/>
</dbReference>
<dbReference type="PANTHER" id="PTHR46916:SF2">
    <property type="entry name" value="TRANSMEMBRANE PROTEIN 205"/>
    <property type="match status" value="1"/>
</dbReference>
<dbReference type="Pfam" id="PF13664">
    <property type="entry name" value="DUF4149"/>
    <property type="match status" value="1"/>
</dbReference>
<evidence type="ECO:0000255" key="1"/>
<evidence type="ECO:0000305" key="2"/>
<feature type="chain" id="PRO_0000317500" description="Transmembrane protein 205">
    <location>
        <begin position="1"/>
        <end position="189"/>
    </location>
</feature>
<feature type="transmembrane region" description="Helical" evidence="1">
    <location>
        <begin position="18"/>
        <end position="38"/>
    </location>
</feature>
<feature type="transmembrane region" description="Helical" evidence="1">
    <location>
        <begin position="53"/>
        <end position="73"/>
    </location>
</feature>
<feature type="transmembrane region" description="Helical" evidence="1">
    <location>
        <begin position="81"/>
        <end position="101"/>
    </location>
</feature>
<feature type="transmembrane region" description="Helical" evidence="1">
    <location>
        <begin position="166"/>
        <end position="186"/>
    </location>
</feature>
<keyword id="KW-0472">Membrane</keyword>
<keyword id="KW-1185">Reference proteome</keyword>
<keyword id="KW-0812">Transmembrane</keyword>
<keyword id="KW-1133">Transmembrane helix</keyword>
<sequence length="189" mass="20970">MEEGGNPGSLTKVVHLLVLSGAWGMQMWVTFISGFVLFRGLPRHTFGLVQSKLFPFYFHISMGCAFVNLCILASQCSWAQLTFWEASQLFLLLLSLTLATINARWLESRTTAAMWALQTVEKERGLGGEVPGSHQGSDPYHQLRGQDPKYSALRQQFFRYHGLSSLCNLGCLLSNGLHLAGLALALHNL</sequence>
<accession>Q32L10</accession>